<gene>
    <name evidence="1" type="primary">groEL</name>
    <name evidence="1" type="synonym">groL</name>
    <name type="ordered locus">BMEA_B0195</name>
</gene>
<keyword id="KW-0067">ATP-binding</keyword>
<keyword id="KW-0143">Chaperone</keyword>
<keyword id="KW-0963">Cytoplasm</keyword>
<keyword id="KW-0413">Isomerase</keyword>
<keyword id="KW-0547">Nucleotide-binding</keyword>
<dbReference type="EC" id="5.6.1.7" evidence="1"/>
<dbReference type="EMBL" id="CP001489">
    <property type="protein sequence ID" value="ACO02068.1"/>
    <property type="molecule type" value="Genomic_DNA"/>
</dbReference>
<dbReference type="RefSeq" id="WP_002966387.1">
    <property type="nucleotide sequence ID" value="NC_012442.1"/>
</dbReference>
<dbReference type="SMR" id="C0RKD5"/>
<dbReference type="GeneID" id="93015849"/>
<dbReference type="KEGG" id="bmi:BMEA_B0195"/>
<dbReference type="HOGENOM" id="CLU_016503_3_0_5"/>
<dbReference type="Proteomes" id="UP000001748">
    <property type="component" value="Chromosome II"/>
</dbReference>
<dbReference type="GO" id="GO:0005737">
    <property type="term" value="C:cytoplasm"/>
    <property type="evidence" value="ECO:0007669"/>
    <property type="project" value="UniProtKB-SubCell"/>
</dbReference>
<dbReference type="GO" id="GO:0005524">
    <property type="term" value="F:ATP binding"/>
    <property type="evidence" value="ECO:0007669"/>
    <property type="project" value="UniProtKB-UniRule"/>
</dbReference>
<dbReference type="GO" id="GO:0140662">
    <property type="term" value="F:ATP-dependent protein folding chaperone"/>
    <property type="evidence" value="ECO:0007669"/>
    <property type="project" value="InterPro"/>
</dbReference>
<dbReference type="GO" id="GO:0016853">
    <property type="term" value="F:isomerase activity"/>
    <property type="evidence" value="ECO:0007669"/>
    <property type="project" value="UniProtKB-KW"/>
</dbReference>
<dbReference type="GO" id="GO:0051082">
    <property type="term" value="F:unfolded protein binding"/>
    <property type="evidence" value="ECO:0007669"/>
    <property type="project" value="UniProtKB-UniRule"/>
</dbReference>
<dbReference type="GO" id="GO:0042026">
    <property type="term" value="P:protein refolding"/>
    <property type="evidence" value="ECO:0007669"/>
    <property type="project" value="UniProtKB-UniRule"/>
</dbReference>
<dbReference type="CDD" id="cd03344">
    <property type="entry name" value="GroEL"/>
    <property type="match status" value="1"/>
</dbReference>
<dbReference type="FunFam" id="1.10.560.10:FF:000001">
    <property type="entry name" value="60 kDa chaperonin"/>
    <property type="match status" value="1"/>
</dbReference>
<dbReference type="FunFam" id="3.50.7.10:FF:000001">
    <property type="entry name" value="60 kDa chaperonin"/>
    <property type="match status" value="1"/>
</dbReference>
<dbReference type="Gene3D" id="3.50.7.10">
    <property type="entry name" value="GroEL"/>
    <property type="match status" value="1"/>
</dbReference>
<dbReference type="Gene3D" id="1.10.560.10">
    <property type="entry name" value="GroEL-like equatorial domain"/>
    <property type="match status" value="1"/>
</dbReference>
<dbReference type="Gene3D" id="3.30.260.10">
    <property type="entry name" value="TCP-1-like chaperonin intermediate domain"/>
    <property type="match status" value="1"/>
</dbReference>
<dbReference type="HAMAP" id="MF_00600">
    <property type="entry name" value="CH60"/>
    <property type="match status" value="1"/>
</dbReference>
<dbReference type="InterPro" id="IPR018370">
    <property type="entry name" value="Chaperonin_Cpn60_CS"/>
</dbReference>
<dbReference type="InterPro" id="IPR001844">
    <property type="entry name" value="Cpn60/GroEL"/>
</dbReference>
<dbReference type="InterPro" id="IPR002423">
    <property type="entry name" value="Cpn60/GroEL/TCP-1"/>
</dbReference>
<dbReference type="InterPro" id="IPR027409">
    <property type="entry name" value="GroEL-like_apical_dom_sf"/>
</dbReference>
<dbReference type="InterPro" id="IPR027413">
    <property type="entry name" value="GROEL-like_equatorial_sf"/>
</dbReference>
<dbReference type="InterPro" id="IPR027410">
    <property type="entry name" value="TCP-1-like_intermed_sf"/>
</dbReference>
<dbReference type="NCBIfam" id="TIGR02348">
    <property type="entry name" value="GroEL"/>
    <property type="match status" value="1"/>
</dbReference>
<dbReference type="NCBIfam" id="NF000592">
    <property type="entry name" value="PRK00013.1"/>
    <property type="match status" value="1"/>
</dbReference>
<dbReference type="NCBIfam" id="NF009487">
    <property type="entry name" value="PRK12849.1"/>
    <property type="match status" value="1"/>
</dbReference>
<dbReference type="NCBIfam" id="NF009488">
    <property type="entry name" value="PRK12850.1"/>
    <property type="match status" value="1"/>
</dbReference>
<dbReference type="NCBIfam" id="NF009489">
    <property type="entry name" value="PRK12851.1"/>
    <property type="match status" value="1"/>
</dbReference>
<dbReference type="PANTHER" id="PTHR45633">
    <property type="entry name" value="60 KDA HEAT SHOCK PROTEIN, MITOCHONDRIAL"/>
    <property type="match status" value="1"/>
</dbReference>
<dbReference type="Pfam" id="PF00118">
    <property type="entry name" value="Cpn60_TCP1"/>
    <property type="match status" value="1"/>
</dbReference>
<dbReference type="PRINTS" id="PR00298">
    <property type="entry name" value="CHAPERONIN60"/>
</dbReference>
<dbReference type="SUPFAM" id="SSF52029">
    <property type="entry name" value="GroEL apical domain-like"/>
    <property type="match status" value="1"/>
</dbReference>
<dbReference type="SUPFAM" id="SSF48592">
    <property type="entry name" value="GroEL equatorial domain-like"/>
    <property type="match status" value="1"/>
</dbReference>
<dbReference type="SUPFAM" id="SSF54849">
    <property type="entry name" value="GroEL-intermediate domain like"/>
    <property type="match status" value="1"/>
</dbReference>
<dbReference type="PROSITE" id="PS00296">
    <property type="entry name" value="CHAPERONINS_CPN60"/>
    <property type="match status" value="1"/>
</dbReference>
<accession>C0RKD5</accession>
<name>CH60_BRUMB</name>
<feature type="chain" id="PRO_1000147020" description="Chaperonin GroEL">
    <location>
        <begin position="1"/>
        <end position="546"/>
    </location>
</feature>
<feature type="binding site" evidence="1">
    <location>
        <begin position="30"/>
        <end position="33"/>
    </location>
    <ligand>
        <name>ATP</name>
        <dbReference type="ChEBI" id="CHEBI:30616"/>
    </ligand>
</feature>
<feature type="binding site" evidence="1">
    <location>
        <position position="51"/>
    </location>
    <ligand>
        <name>ATP</name>
        <dbReference type="ChEBI" id="CHEBI:30616"/>
    </ligand>
</feature>
<feature type="binding site" evidence="1">
    <location>
        <begin position="87"/>
        <end position="91"/>
    </location>
    <ligand>
        <name>ATP</name>
        <dbReference type="ChEBI" id="CHEBI:30616"/>
    </ligand>
</feature>
<feature type="binding site" evidence="1">
    <location>
        <position position="415"/>
    </location>
    <ligand>
        <name>ATP</name>
        <dbReference type="ChEBI" id="CHEBI:30616"/>
    </ligand>
</feature>
<feature type="binding site" evidence="1">
    <location>
        <position position="495"/>
    </location>
    <ligand>
        <name>ATP</name>
        <dbReference type="ChEBI" id="CHEBI:30616"/>
    </ligand>
</feature>
<comment type="function">
    <text evidence="1">Together with its co-chaperonin GroES, plays an essential role in assisting protein folding. The GroEL-GroES system forms a nano-cage that allows encapsulation of the non-native substrate proteins and provides a physical environment optimized to promote and accelerate protein folding.</text>
</comment>
<comment type="catalytic activity">
    <reaction evidence="1">
        <text>ATP + H2O + a folded polypeptide = ADP + phosphate + an unfolded polypeptide.</text>
        <dbReference type="EC" id="5.6.1.7"/>
    </reaction>
</comment>
<comment type="subunit">
    <text evidence="1">Forms a cylinder of 14 subunits composed of two heptameric rings stacked back-to-back. Interacts with the co-chaperonin GroES.</text>
</comment>
<comment type="subcellular location">
    <subcellularLocation>
        <location evidence="1">Cytoplasm</location>
    </subcellularLocation>
</comment>
<comment type="similarity">
    <text evidence="1">Belongs to the chaperonin (HSP60) family.</text>
</comment>
<reference key="1">
    <citation type="submission" date="2009-03" db="EMBL/GenBank/DDBJ databases">
        <title>Brucella melitensis ATCC 23457 whole genome shotgun sequencing project.</title>
        <authorList>
            <person name="Setubal J.C."/>
            <person name="Boyle S."/>
            <person name="Crasta O.R."/>
            <person name="Gillespie J.J."/>
            <person name="Kenyon R.W."/>
            <person name="Lu J."/>
            <person name="Mane S."/>
            <person name="Nagrani S."/>
            <person name="Shallom J.M."/>
            <person name="Shallom S."/>
            <person name="Shukla M."/>
            <person name="Snyder E.E."/>
            <person name="Sobral B.W."/>
            <person name="Wattam A.R."/>
            <person name="Will R."/>
            <person name="Williams K."/>
            <person name="Yoo H."/>
            <person name="Munk C."/>
            <person name="Tapia R."/>
            <person name="Han C."/>
            <person name="Detter J.C."/>
            <person name="Bruce D."/>
            <person name="Brettin T.S."/>
        </authorList>
    </citation>
    <scope>NUCLEOTIDE SEQUENCE [LARGE SCALE GENOMIC DNA]</scope>
    <source>
        <strain>ATCC 23457</strain>
    </source>
</reference>
<sequence length="546" mass="57515">MAAKDVKFGRTAREKMLRGVDILADAVKVTLGPKGRNVVIEKSFGAPRITKDGVSVAKEVELEDKFENMGAQMLREVASKTNDTAGDGTTTATVLGQAIVQEGAKAVAAGMNPMDLKRGIDLAVNEVVAELLKKAKKINTSEEVAQVGTISANGEAEIGKMIAEAMQKVGNEGVITVEEAKTAETELEVVEGMQFDRGYLSPYFVTNPEKMVADLEDAYILLHEKKLSNLQALLPVLEAVVQTSKPLLIIAEDVEGEALATLVVNKLRGGLKIAAVKAPGFGDRRKAMLEDIAILTGGQVISEDLGIKLESVTLDMLGRAKKVSISKENTTIVDGAGQKAEIDARVGQIKQQIEETTSDYDREKLQERLAKLAGGVAVIRVGGATEVEVKEKKDRVDDALNATRAAVEEGIVAGGGTALLRASTKITAKGVNADQEAGINIVRRAIQAPARQITTNAGEEASVIVGKILENTSETFGYNTANGEYGDLISLGIVDPVKVVRTALQNAASVAGLLITTEAMIAELPKKDAAPAGMPGGMGGMGGMDF</sequence>
<proteinExistence type="inferred from homology"/>
<protein>
    <recommendedName>
        <fullName evidence="1">Chaperonin GroEL</fullName>
        <ecNumber evidence="1">5.6.1.7</ecNumber>
    </recommendedName>
    <alternativeName>
        <fullName evidence="1">60 kDa chaperonin</fullName>
    </alternativeName>
    <alternativeName>
        <fullName evidence="1">Chaperonin-60</fullName>
        <shortName evidence="1">Cpn60</shortName>
    </alternativeName>
</protein>
<evidence type="ECO:0000255" key="1">
    <source>
        <dbReference type="HAMAP-Rule" id="MF_00600"/>
    </source>
</evidence>
<organism>
    <name type="scientific">Brucella melitensis biotype 2 (strain ATCC 23457)</name>
    <dbReference type="NCBI Taxonomy" id="546272"/>
    <lineage>
        <taxon>Bacteria</taxon>
        <taxon>Pseudomonadati</taxon>
        <taxon>Pseudomonadota</taxon>
        <taxon>Alphaproteobacteria</taxon>
        <taxon>Hyphomicrobiales</taxon>
        <taxon>Brucellaceae</taxon>
        <taxon>Brucella/Ochrobactrum group</taxon>
        <taxon>Brucella</taxon>
    </lineage>
</organism>